<dbReference type="EMBL" id="CP000382">
    <property type="protein sequence ID" value="ABK62269.1"/>
    <property type="molecule type" value="Genomic_DNA"/>
</dbReference>
<dbReference type="RefSeq" id="WP_003365336.1">
    <property type="nucleotide sequence ID" value="NC_008593.1"/>
</dbReference>
<dbReference type="SMR" id="A0Q1T6"/>
<dbReference type="STRING" id="386415.NT01CX_0079"/>
<dbReference type="KEGG" id="cno:NT01CX_0079"/>
<dbReference type="eggNOG" id="COG0211">
    <property type="taxonomic scope" value="Bacteria"/>
</dbReference>
<dbReference type="HOGENOM" id="CLU_095424_4_0_9"/>
<dbReference type="Proteomes" id="UP000008220">
    <property type="component" value="Chromosome"/>
</dbReference>
<dbReference type="GO" id="GO:0022625">
    <property type="term" value="C:cytosolic large ribosomal subunit"/>
    <property type="evidence" value="ECO:0007669"/>
    <property type="project" value="TreeGrafter"/>
</dbReference>
<dbReference type="GO" id="GO:0003735">
    <property type="term" value="F:structural constituent of ribosome"/>
    <property type="evidence" value="ECO:0007669"/>
    <property type="project" value="InterPro"/>
</dbReference>
<dbReference type="GO" id="GO:0006412">
    <property type="term" value="P:translation"/>
    <property type="evidence" value="ECO:0007669"/>
    <property type="project" value="UniProtKB-UniRule"/>
</dbReference>
<dbReference type="FunFam" id="2.40.50.100:FF:000004">
    <property type="entry name" value="50S ribosomal protein L27"/>
    <property type="match status" value="1"/>
</dbReference>
<dbReference type="Gene3D" id="2.40.50.100">
    <property type="match status" value="1"/>
</dbReference>
<dbReference type="HAMAP" id="MF_00539">
    <property type="entry name" value="Ribosomal_bL27"/>
    <property type="match status" value="1"/>
</dbReference>
<dbReference type="InterPro" id="IPR001684">
    <property type="entry name" value="Ribosomal_bL27"/>
</dbReference>
<dbReference type="InterPro" id="IPR018261">
    <property type="entry name" value="Ribosomal_bL27_CS"/>
</dbReference>
<dbReference type="NCBIfam" id="TIGR00062">
    <property type="entry name" value="L27"/>
    <property type="match status" value="1"/>
</dbReference>
<dbReference type="PANTHER" id="PTHR15893:SF0">
    <property type="entry name" value="LARGE RIBOSOMAL SUBUNIT PROTEIN BL27M"/>
    <property type="match status" value="1"/>
</dbReference>
<dbReference type="PANTHER" id="PTHR15893">
    <property type="entry name" value="RIBOSOMAL PROTEIN L27"/>
    <property type="match status" value="1"/>
</dbReference>
<dbReference type="Pfam" id="PF01016">
    <property type="entry name" value="Ribosomal_L27"/>
    <property type="match status" value="1"/>
</dbReference>
<dbReference type="PRINTS" id="PR00063">
    <property type="entry name" value="RIBOSOMALL27"/>
</dbReference>
<dbReference type="SUPFAM" id="SSF110324">
    <property type="entry name" value="Ribosomal L27 protein-like"/>
    <property type="match status" value="1"/>
</dbReference>
<dbReference type="PROSITE" id="PS00831">
    <property type="entry name" value="RIBOSOMAL_L27"/>
    <property type="match status" value="1"/>
</dbReference>
<comment type="PTM">
    <text evidence="1">The N-terminus is cleaved by ribosomal processing cysteine protease Prp.</text>
</comment>
<comment type="similarity">
    <text evidence="2">Belongs to the bacterial ribosomal protein bL27 family.</text>
</comment>
<accession>A0Q1T6</accession>
<reference key="1">
    <citation type="journal article" date="2006" name="Nat. Biotechnol.">
        <title>The genome and transcriptomes of the anti-tumor agent Clostridium novyi-NT.</title>
        <authorList>
            <person name="Bettegowda C."/>
            <person name="Huang X."/>
            <person name="Lin J."/>
            <person name="Cheong I."/>
            <person name="Kohli M."/>
            <person name="Szabo S.A."/>
            <person name="Zhang X."/>
            <person name="Diaz L.A. Jr."/>
            <person name="Velculescu V.E."/>
            <person name="Parmigiani G."/>
            <person name="Kinzler K.W."/>
            <person name="Vogelstein B."/>
            <person name="Zhou S."/>
        </authorList>
    </citation>
    <scope>NUCLEOTIDE SEQUENCE [LARGE SCALE GENOMIC DNA]</scope>
    <source>
        <strain>NT</strain>
    </source>
</reference>
<protein>
    <recommendedName>
        <fullName evidence="2">Large ribosomal subunit protein bL27</fullName>
    </recommendedName>
    <alternativeName>
        <fullName evidence="3">50S ribosomal protein L27</fullName>
    </alternativeName>
</protein>
<gene>
    <name evidence="2" type="primary">rpmA</name>
    <name type="ordered locus">NT01CX_0079</name>
</gene>
<proteinExistence type="inferred from homology"/>
<evidence type="ECO:0000250" key="1">
    <source>
        <dbReference type="UniProtKB" id="Q2FXT0"/>
    </source>
</evidence>
<evidence type="ECO:0000255" key="2">
    <source>
        <dbReference type="HAMAP-Rule" id="MF_00539"/>
    </source>
</evidence>
<evidence type="ECO:0000305" key="3"/>
<keyword id="KW-1185">Reference proteome</keyword>
<keyword id="KW-0687">Ribonucleoprotein</keyword>
<keyword id="KW-0689">Ribosomal protein</keyword>
<name>RL27_CLONN</name>
<sequence>MLLMNLQLFAHKKGVGSSKNGRDSESKRLGTKCGDGQFVLAGNILVRQRGTKIHPGVNVGRGGDDTLYAKVDGIVKYERVGRSKKQASVYPVEIENVAE</sequence>
<feature type="propeptide" id="PRO_0000459884" evidence="1">
    <location>
        <begin position="1"/>
        <end position="9"/>
    </location>
</feature>
<feature type="chain" id="PRO_1000017456" description="Large ribosomal subunit protein bL27">
    <location>
        <begin position="10"/>
        <end position="99"/>
    </location>
</feature>
<organism>
    <name type="scientific">Clostridium novyi (strain NT)</name>
    <dbReference type="NCBI Taxonomy" id="386415"/>
    <lineage>
        <taxon>Bacteria</taxon>
        <taxon>Bacillati</taxon>
        <taxon>Bacillota</taxon>
        <taxon>Clostridia</taxon>
        <taxon>Eubacteriales</taxon>
        <taxon>Clostridiaceae</taxon>
        <taxon>Clostridium</taxon>
    </lineage>
</organism>